<protein>
    <recommendedName>
        <fullName evidence="2">Large ribosomal subunit protein uL30</fullName>
    </recommendedName>
    <alternativeName>
        <fullName>60S ribosomal protein L7</fullName>
    </alternativeName>
</protein>
<name>RL7_DICDI</name>
<gene>
    <name type="primary">rpl7</name>
    <name type="ORF">DDB_G0276441</name>
</gene>
<accession>P11874</accession>
<accession>Q551I9</accession>
<accession>Q8T2I4</accession>
<comment type="function">
    <text evidence="1">Binds to G-rich structures in 28S rRNA and in mRNAs. Plays a regulatory role in the translation apparatus; inhibits cell-free translation of mRNAs (By similarity).</text>
</comment>
<comment type="similarity">
    <text evidence="2">Belongs to the universal ribosomal protein uL30 family.</text>
</comment>
<evidence type="ECO:0000250" key="1"/>
<evidence type="ECO:0000305" key="2"/>
<proteinExistence type="evidence at protein level"/>
<reference key="1">
    <citation type="journal article" date="1989" name="Nucleic Acids Res.">
        <title>A Dictyostelium discoideum cDNA coding for a protein with homology to the rat ribosomal protein L7.</title>
        <authorList>
            <person name="Szymkowski D.E."/>
            <person name="Kelly B."/>
            <person name="Deering R.A."/>
        </authorList>
    </citation>
    <scope>NUCLEOTIDE SEQUENCE [MRNA]</scope>
    <source>
        <strain>AX2</strain>
    </source>
</reference>
<reference key="2">
    <citation type="journal article" date="1990" name="Nucleic Acids Res.">
        <title>Identification and characterization of a Dictyostelium discoideum ribosomal protein gene.</title>
        <authorList>
            <person name="Szymkowski D.E."/>
            <person name="Deering R.A."/>
        </authorList>
    </citation>
    <scope>NUCLEOTIDE SEQUENCE [MRNA]</scope>
</reference>
<reference key="3">
    <citation type="journal article" date="2002" name="Nature">
        <title>Sequence and analysis of chromosome 2 of Dictyostelium discoideum.</title>
        <authorList>
            <person name="Gloeckner G."/>
            <person name="Eichinger L."/>
            <person name="Szafranski K."/>
            <person name="Pachebat J.A."/>
            <person name="Bankier A.T."/>
            <person name="Dear P.H."/>
            <person name="Lehmann R."/>
            <person name="Baumgart C."/>
            <person name="Parra G."/>
            <person name="Abril J.F."/>
            <person name="Guigo R."/>
            <person name="Kumpf K."/>
            <person name="Tunggal B."/>
            <person name="Cox E.C."/>
            <person name="Quail M.A."/>
            <person name="Platzer M."/>
            <person name="Rosenthal A."/>
            <person name="Noegel A.A."/>
        </authorList>
    </citation>
    <scope>NUCLEOTIDE SEQUENCE [LARGE SCALE GENOMIC DNA]</scope>
    <source>
        <strain>AX4</strain>
    </source>
</reference>
<reference key="4">
    <citation type="journal article" date="2005" name="Nature">
        <title>The genome of the social amoeba Dictyostelium discoideum.</title>
        <authorList>
            <person name="Eichinger L."/>
            <person name="Pachebat J.A."/>
            <person name="Gloeckner G."/>
            <person name="Rajandream M.A."/>
            <person name="Sucgang R."/>
            <person name="Berriman M."/>
            <person name="Song J."/>
            <person name="Olsen R."/>
            <person name="Szafranski K."/>
            <person name="Xu Q."/>
            <person name="Tunggal B."/>
            <person name="Kummerfeld S."/>
            <person name="Madera M."/>
            <person name="Konfortov B.A."/>
            <person name="Rivero F."/>
            <person name="Bankier A.T."/>
            <person name="Lehmann R."/>
            <person name="Hamlin N."/>
            <person name="Davies R."/>
            <person name="Gaudet P."/>
            <person name="Fey P."/>
            <person name="Pilcher K."/>
            <person name="Chen G."/>
            <person name="Saunders D."/>
            <person name="Sodergren E.J."/>
            <person name="Davis P."/>
            <person name="Kerhornou A."/>
            <person name="Nie X."/>
            <person name="Hall N."/>
            <person name="Anjard C."/>
            <person name="Hemphill L."/>
            <person name="Bason N."/>
            <person name="Farbrother P."/>
            <person name="Desany B."/>
            <person name="Just E."/>
            <person name="Morio T."/>
            <person name="Rost R."/>
            <person name="Churcher C.M."/>
            <person name="Cooper J."/>
            <person name="Haydock S."/>
            <person name="van Driessche N."/>
            <person name="Cronin A."/>
            <person name="Goodhead I."/>
            <person name="Muzny D.M."/>
            <person name="Mourier T."/>
            <person name="Pain A."/>
            <person name="Lu M."/>
            <person name="Harper D."/>
            <person name="Lindsay R."/>
            <person name="Hauser H."/>
            <person name="James K.D."/>
            <person name="Quiles M."/>
            <person name="Madan Babu M."/>
            <person name="Saito T."/>
            <person name="Buchrieser C."/>
            <person name="Wardroper A."/>
            <person name="Felder M."/>
            <person name="Thangavelu M."/>
            <person name="Johnson D."/>
            <person name="Knights A."/>
            <person name="Loulseged H."/>
            <person name="Mungall K.L."/>
            <person name="Oliver K."/>
            <person name="Price C."/>
            <person name="Quail M.A."/>
            <person name="Urushihara H."/>
            <person name="Hernandez J."/>
            <person name="Rabbinowitsch E."/>
            <person name="Steffen D."/>
            <person name="Sanders M."/>
            <person name="Ma J."/>
            <person name="Kohara Y."/>
            <person name="Sharp S."/>
            <person name="Simmonds M.N."/>
            <person name="Spiegler S."/>
            <person name="Tivey A."/>
            <person name="Sugano S."/>
            <person name="White B."/>
            <person name="Walker D."/>
            <person name="Woodward J.R."/>
            <person name="Winckler T."/>
            <person name="Tanaka Y."/>
            <person name="Shaulsky G."/>
            <person name="Schleicher M."/>
            <person name="Weinstock G.M."/>
            <person name="Rosenthal A."/>
            <person name="Cox E.C."/>
            <person name="Chisholm R.L."/>
            <person name="Gibbs R.A."/>
            <person name="Loomis W.F."/>
            <person name="Platzer M."/>
            <person name="Kay R.R."/>
            <person name="Williams J.G."/>
            <person name="Dear P.H."/>
            <person name="Noegel A.A."/>
            <person name="Barrell B.G."/>
            <person name="Kuspa A."/>
        </authorList>
    </citation>
    <scope>NUCLEOTIDE SEQUENCE [LARGE SCALE GENOMIC DNA]</scope>
    <source>
        <strain>AX4</strain>
    </source>
</reference>
<reference key="5">
    <citation type="submission" date="2009-07" db="UniProtKB">
        <authorList>
            <person name="Bienvenut W.V."/>
            <person name="Ura S."/>
            <person name="Insall R.H."/>
        </authorList>
    </citation>
    <scope>PROTEIN SEQUENCE OF 5-20; 72-92; 112-122; 133-155; 165-175; 201-215 AND 223-244</scope>
    <scope>IDENTIFICATION BY MASS SPECTROMETRY</scope>
    <source>
        <strain>AX2</strain>
    </source>
</reference>
<organism>
    <name type="scientific">Dictyostelium discoideum</name>
    <name type="common">Social amoeba</name>
    <dbReference type="NCBI Taxonomy" id="44689"/>
    <lineage>
        <taxon>Eukaryota</taxon>
        <taxon>Amoebozoa</taxon>
        <taxon>Evosea</taxon>
        <taxon>Eumycetozoa</taxon>
        <taxon>Dictyostelia</taxon>
        <taxon>Dictyosteliales</taxon>
        <taxon>Dictyosteliaceae</taxon>
        <taxon>Dictyostelium</taxon>
    </lineage>
</organism>
<feature type="chain" id="PRO_0000104637" description="Large ribosomal subunit protein uL30">
    <location>
        <begin position="1"/>
        <end position="246"/>
    </location>
</feature>
<sequence>MSQKVATKTAPVPESILKKRATSQKKAVDVAKLGRAQQLRNSRLNSVYFKRAEKYVSEYHKTEREAIRLNRIAKNSGTFYVPPAAKVAFVIRIRGINGVSPKPRKVLKLLRLLQLNNGVFVKLNKASINMLKLVEPYVAYGFPNLKSIKELIYKRGHLKIDGQRIPLTSNDMVEKQLGKFGIICVEDIIHEITTCGKHFKQVNNSLWPFKLNCPRGGFNMKKTPFLQGGDAGNREHLINNLIHRMN</sequence>
<dbReference type="EMBL" id="X14909">
    <property type="protein sequence ID" value="CAA33035.1"/>
    <property type="molecule type" value="mRNA"/>
</dbReference>
<dbReference type="EMBL" id="AAFI02000015">
    <property type="protein sequence ID" value="EAL69174.1"/>
    <property type="molecule type" value="Genomic_DNA"/>
</dbReference>
<dbReference type="PIR" id="S04849">
    <property type="entry name" value="R5DO7"/>
</dbReference>
<dbReference type="RefSeq" id="XP_643145.1">
    <property type="nucleotide sequence ID" value="XM_638053.1"/>
</dbReference>
<dbReference type="SMR" id="P11874"/>
<dbReference type="FunCoup" id="P11874">
    <property type="interactions" value="628"/>
</dbReference>
<dbReference type="STRING" id="44689.P11874"/>
<dbReference type="PaxDb" id="44689-DDB0185073"/>
<dbReference type="EnsemblProtists" id="EAL69174">
    <property type="protein sequence ID" value="EAL69174"/>
    <property type="gene ID" value="DDB_G0276441"/>
</dbReference>
<dbReference type="GeneID" id="8620552"/>
<dbReference type="KEGG" id="ddi:DDB_G0276441"/>
<dbReference type="dictyBase" id="DDB_G0276441">
    <property type="gene designation" value="rpl7"/>
</dbReference>
<dbReference type="VEuPathDB" id="AmoebaDB:DDB_G0276441"/>
<dbReference type="eggNOG" id="KOG3184">
    <property type="taxonomic scope" value="Eukaryota"/>
</dbReference>
<dbReference type="HOGENOM" id="CLU_055156_0_2_1"/>
<dbReference type="InParanoid" id="P11874"/>
<dbReference type="OMA" id="IVEPWIA"/>
<dbReference type="PhylomeDB" id="P11874"/>
<dbReference type="Reactome" id="R-DDI-156827">
    <property type="pathway name" value="L13a-mediated translational silencing of Ceruloplasmin expression"/>
</dbReference>
<dbReference type="Reactome" id="R-DDI-1799339">
    <property type="pathway name" value="SRP-dependent cotranslational protein targeting to membrane"/>
</dbReference>
<dbReference type="Reactome" id="R-DDI-72689">
    <property type="pathway name" value="Formation of a pool of free 40S subunits"/>
</dbReference>
<dbReference type="Reactome" id="R-DDI-72706">
    <property type="pathway name" value="GTP hydrolysis and joining of the 60S ribosomal subunit"/>
</dbReference>
<dbReference type="Reactome" id="R-DDI-975956">
    <property type="pathway name" value="Nonsense Mediated Decay (NMD) independent of the Exon Junction Complex (EJC)"/>
</dbReference>
<dbReference type="Reactome" id="R-DDI-975957">
    <property type="pathway name" value="Nonsense Mediated Decay (NMD) enhanced by the Exon Junction Complex (EJC)"/>
</dbReference>
<dbReference type="PRO" id="PR:P11874"/>
<dbReference type="Proteomes" id="UP000002195">
    <property type="component" value="Chromosome 2"/>
</dbReference>
<dbReference type="GO" id="GO:0022625">
    <property type="term" value="C:cytosolic large ribosomal subunit"/>
    <property type="evidence" value="ECO:0000318"/>
    <property type="project" value="GO_Central"/>
</dbReference>
<dbReference type="GO" id="GO:0031012">
    <property type="term" value="C:extracellular matrix"/>
    <property type="evidence" value="ECO:0007005"/>
    <property type="project" value="dictyBase"/>
</dbReference>
<dbReference type="GO" id="GO:0003723">
    <property type="term" value="F:RNA binding"/>
    <property type="evidence" value="ECO:0000318"/>
    <property type="project" value="GO_Central"/>
</dbReference>
<dbReference type="GO" id="GO:0003735">
    <property type="term" value="F:structural constituent of ribosome"/>
    <property type="evidence" value="ECO:0000318"/>
    <property type="project" value="GO_Central"/>
</dbReference>
<dbReference type="GO" id="GO:0000463">
    <property type="term" value="P:maturation of LSU-rRNA from tricistronic rRNA transcript (SSU-rRNA, 5.8S rRNA, LSU-rRNA)"/>
    <property type="evidence" value="ECO:0000318"/>
    <property type="project" value="GO_Central"/>
</dbReference>
<dbReference type="CDD" id="cd01657">
    <property type="entry name" value="Ribosomal_L7_archeal_euk"/>
    <property type="match status" value="1"/>
</dbReference>
<dbReference type="FunFam" id="1.10.15.30:FF:000001">
    <property type="entry name" value="60S ribosomal protein L7"/>
    <property type="match status" value="1"/>
</dbReference>
<dbReference type="FunFam" id="3.30.1390.20:FF:000003">
    <property type="entry name" value="60S ribosomal protein L7"/>
    <property type="match status" value="1"/>
</dbReference>
<dbReference type="Gene3D" id="3.30.1390.20">
    <property type="entry name" value="Ribosomal protein L30, ferredoxin-like fold domain"/>
    <property type="match status" value="1"/>
</dbReference>
<dbReference type="InterPro" id="IPR036919">
    <property type="entry name" value="Ribo_uL30_ferredoxin-like_sf"/>
</dbReference>
<dbReference type="InterPro" id="IPR039699">
    <property type="entry name" value="Ribosomal_uL30"/>
</dbReference>
<dbReference type="InterPro" id="IPR018038">
    <property type="entry name" value="Ribosomal_uL30_CS"/>
</dbReference>
<dbReference type="InterPro" id="IPR005998">
    <property type="entry name" value="Ribosomal_uL30_euk"/>
</dbReference>
<dbReference type="InterPro" id="IPR035808">
    <property type="entry name" value="Ribosomal_uL30_euk_arc"/>
</dbReference>
<dbReference type="InterPro" id="IPR016082">
    <property type="entry name" value="Ribosomal_uL30_ferredoxin-like"/>
</dbReference>
<dbReference type="InterPro" id="IPR012988">
    <property type="entry name" value="Ribosomal_uL30_N_euk"/>
</dbReference>
<dbReference type="NCBIfam" id="TIGR01310">
    <property type="entry name" value="uL30_euk"/>
    <property type="match status" value="1"/>
</dbReference>
<dbReference type="PANTHER" id="PTHR11524">
    <property type="entry name" value="60S RIBOSOMAL PROTEIN L7"/>
    <property type="match status" value="1"/>
</dbReference>
<dbReference type="PANTHER" id="PTHR11524:SF16">
    <property type="entry name" value="LARGE RIBOSOMAL SUBUNIT PROTEIN UL30"/>
    <property type="match status" value="1"/>
</dbReference>
<dbReference type="Pfam" id="PF00327">
    <property type="entry name" value="Ribosomal_L30"/>
    <property type="match status" value="1"/>
</dbReference>
<dbReference type="Pfam" id="PF08079">
    <property type="entry name" value="Ribosomal_L30_N"/>
    <property type="match status" value="1"/>
</dbReference>
<dbReference type="SUPFAM" id="SSF55129">
    <property type="entry name" value="Ribosomal protein L30p/L7e"/>
    <property type="match status" value="1"/>
</dbReference>
<dbReference type="PROSITE" id="PS00634">
    <property type="entry name" value="RIBOSOMAL_L30"/>
    <property type="match status" value="1"/>
</dbReference>
<keyword id="KW-0903">Direct protein sequencing</keyword>
<keyword id="KW-1185">Reference proteome</keyword>
<keyword id="KW-0687">Ribonucleoprotein</keyword>
<keyword id="KW-0689">Ribosomal protein</keyword>
<keyword id="KW-0694">RNA-binding</keyword>